<keyword id="KW-0963">Cytoplasm</keyword>
<gene>
    <name type="ordered locus">NWMN_0985</name>
</gene>
<comment type="subcellular location">
    <subcellularLocation>
        <location evidence="1">Cytoplasm</location>
    </subcellularLocation>
</comment>
<comment type="similarity">
    <text evidence="1">Belongs to the UPF0298 family.</text>
</comment>
<sequence length="84" mass="10413">MNLIPRTSIVVYLKHMKHERQIRKYGHIVHSNRDRKFVIMYVNEQDVDQIVHKLMQLKYVRHIDGSPYKYLKKTYEKEKHEIYN</sequence>
<name>Y985_STAAE</name>
<protein>
    <recommendedName>
        <fullName evidence="1">UPF0298 protein NWMN_0985</fullName>
    </recommendedName>
</protein>
<evidence type="ECO:0000255" key="1">
    <source>
        <dbReference type="HAMAP-Rule" id="MF_01126"/>
    </source>
</evidence>
<reference key="1">
    <citation type="journal article" date="2008" name="J. Bacteriol.">
        <title>Genome sequence of Staphylococcus aureus strain Newman and comparative analysis of staphylococcal genomes: polymorphism and evolution of two major pathogenicity islands.</title>
        <authorList>
            <person name="Baba T."/>
            <person name="Bae T."/>
            <person name="Schneewind O."/>
            <person name="Takeuchi F."/>
            <person name="Hiramatsu K."/>
        </authorList>
    </citation>
    <scope>NUCLEOTIDE SEQUENCE [LARGE SCALE GENOMIC DNA]</scope>
    <source>
        <strain>Newman</strain>
    </source>
</reference>
<proteinExistence type="inferred from homology"/>
<organism>
    <name type="scientific">Staphylococcus aureus (strain Newman)</name>
    <dbReference type="NCBI Taxonomy" id="426430"/>
    <lineage>
        <taxon>Bacteria</taxon>
        <taxon>Bacillati</taxon>
        <taxon>Bacillota</taxon>
        <taxon>Bacilli</taxon>
        <taxon>Bacillales</taxon>
        <taxon>Staphylococcaceae</taxon>
        <taxon>Staphylococcus</taxon>
    </lineage>
</organism>
<accession>A6QFX5</accession>
<dbReference type="EMBL" id="AP009351">
    <property type="protein sequence ID" value="BAF67257.1"/>
    <property type="molecule type" value="Genomic_DNA"/>
</dbReference>
<dbReference type="RefSeq" id="WP_001049150.1">
    <property type="nucleotide sequence ID" value="NZ_JBBIAE010000002.1"/>
</dbReference>
<dbReference type="SMR" id="A6QFX5"/>
<dbReference type="KEGG" id="sae:NWMN_0985"/>
<dbReference type="HOGENOM" id="CLU_159890_2_1_9"/>
<dbReference type="Proteomes" id="UP000006386">
    <property type="component" value="Chromosome"/>
</dbReference>
<dbReference type="GO" id="GO:0005737">
    <property type="term" value="C:cytoplasm"/>
    <property type="evidence" value="ECO:0007669"/>
    <property type="project" value="UniProtKB-SubCell"/>
</dbReference>
<dbReference type="HAMAP" id="MF_01126">
    <property type="entry name" value="UPF0298"/>
    <property type="match status" value="1"/>
</dbReference>
<dbReference type="InterPro" id="IPR016979">
    <property type="entry name" value="DUF2129"/>
</dbReference>
<dbReference type="Pfam" id="PF09902">
    <property type="entry name" value="DUF2129"/>
    <property type="match status" value="1"/>
</dbReference>
<dbReference type="PIRSF" id="PIRSF031653">
    <property type="entry name" value="UCP031653"/>
    <property type="match status" value="1"/>
</dbReference>
<feature type="chain" id="PRO_1000073046" description="UPF0298 protein NWMN_0985">
    <location>
        <begin position="1"/>
        <end position="84"/>
    </location>
</feature>